<protein>
    <recommendedName>
        <fullName evidence="1">Chorismate synthase</fullName>
        <shortName evidence="1">CS</shortName>
        <ecNumber evidence="1">4.2.3.5</ecNumber>
    </recommendedName>
    <alternativeName>
        <fullName evidence="1">5-enolpyruvylshikimate-3-phosphate phospholyase</fullName>
    </alternativeName>
</protein>
<sequence>MRYLTAGESHGQALTAIIEGIPAGLTLSAELINKELKRRQGGYGRGARMRIESDRVHISSGVRHGKTTGAPITLTIQNKDHQKWLDIMAVEAVEEQIKLKRKITHPRPGHADLVGGIKYRFDDLRNALERSSARETAMRVAVGAVAKVVLTELGIETANHVLVFGGIEVAVPEAMPFTDIKKAAEASDLSIVNPKQEATIKAHIDQVKKEGDTLGGIIETIIHGLPAGLGSYVQWDRKLDAKIAQAVLSINAFKGVEFGMGFDMGYQKGSQVMDEIIWHETSGYSRRTNRLGGFEAGMTTGQPIVVKGVMKPIPTLYKPLMSVDTETHEPYKATVERSDPTALPAAGVVMENVVATVITKEILEQFPSDNMTDLKQAFFAYCDYVHHF</sequence>
<organism>
    <name type="scientific">Streptococcus equi subsp. zooepidemicus (strain H70)</name>
    <dbReference type="NCBI Taxonomy" id="553483"/>
    <lineage>
        <taxon>Bacteria</taxon>
        <taxon>Bacillati</taxon>
        <taxon>Bacillota</taxon>
        <taxon>Bacilli</taxon>
        <taxon>Lactobacillales</taxon>
        <taxon>Streptococcaceae</taxon>
        <taxon>Streptococcus</taxon>
    </lineage>
</organism>
<accession>C0MGL3</accession>
<proteinExistence type="inferred from homology"/>
<comment type="function">
    <text evidence="1">Catalyzes the anti-1,4-elimination of the C-3 phosphate and the C-6 proR hydrogen from 5-enolpyruvylshikimate-3-phosphate (EPSP) to yield chorismate, which is the branch point compound that serves as the starting substrate for the three terminal pathways of aromatic amino acid biosynthesis. This reaction introduces a second double bond into the aromatic ring system.</text>
</comment>
<comment type="catalytic activity">
    <reaction evidence="1">
        <text>5-O-(1-carboxyvinyl)-3-phosphoshikimate = chorismate + phosphate</text>
        <dbReference type="Rhea" id="RHEA:21020"/>
        <dbReference type="ChEBI" id="CHEBI:29748"/>
        <dbReference type="ChEBI" id="CHEBI:43474"/>
        <dbReference type="ChEBI" id="CHEBI:57701"/>
        <dbReference type="EC" id="4.2.3.5"/>
    </reaction>
</comment>
<comment type="cofactor">
    <cofactor evidence="1">
        <name>FMNH2</name>
        <dbReference type="ChEBI" id="CHEBI:57618"/>
    </cofactor>
    <text evidence="1">Reduced FMN (FMNH(2)).</text>
</comment>
<comment type="pathway">
    <text evidence="1">Metabolic intermediate biosynthesis; chorismate biosynthesis; chorismate from D-erythrose 4-phosphate and phosphoenolpyruvate: step 7/7.</text>
</comment>
<comment type="subunit">
    <text evidence="1">Homotetramer.</text>
</comment>
<comment type="similarity">
    <text evidence="1">Belongs to the chorismate synthase family.</text>
</comment>
<dbReference type="EC" id="4.2.3.5" evidence="1"/>
<dbReference type="EMBL" id="FM204884">
    <property type="protein sequence ID" value="CAW99489.1"/>
    <property type="molecule type" value="Genomic_DNA"/>
</dbReference>
<dbReference type="SMR" id="C0MGL3"/>
<dbReference type="KEGG" id="seq:SZO_10970"/>
<dbReference type="PATRIC" id="fig|40041.11.peg.1159"/>
<dbReference type="eggNOG" id="COG0082">
    <property type="taxonomic scope" value="Bacteria"/>
</dbReference>
<dbReference type="HOGENOM" id="CLU_034547_2_0_9"/>
<dbReference type="UniPathway" id="UPA00053">
    <property type="reaction ID" value="UER00090"/>
</dbReference>
<dbReference type="Proteomes" id="UP000001368">
    <property type="component" value="Chromosome"/>
</dbReference>
<dbReference type="GO" id="GO:0005829">
    <property type="term" value="C:cytosol"/>
    <property type="evidence" value="ECO:0007669"/>
    <property type="project" value="TreeGrafter"/>
</dbReference>
<dbReference type="GO" id="GO:0004107">
    <property type="term" value="F:chorismate synthase activity"/>
    <property type="evidence" value="ECO:0007669"/>
    <property type="project" value="UniProtKB-UniRule"/>
</dbReference>
<dbReference type="GO" id="GO:0010181">
    <property type="term" value="F:FMN binding"/>
    <property type="evidence" value="ECO:0007669"/>
    <property type="project" value="TreeGrafter"/>
</dbReference>
<dbReference type="GO" id="GO:0008652">
    <property type="term" value="P:amino acid biosynthetic process"/>
    <property type="evidence" value="ECO:0007669"/>
    <property type="project" value="UniProtKB-KW"/>
</dbReference>
<dbReference type="GO" id="GO:0009073">
    <property type="term" value="P:aromatic amino acid family biosynthetic process"/>
    <property type="evidence" value="ECO:0007669"/>
    <property type="project" value="UniProtKB-KW"/>
</dbReference>
<dbReference type="GO" id="GO:0009423">
    <property type="term" value="P:chorismate biosynthetic process"/>
    <property type="evidence" value="ECO:0007669"/>
    <property type="project" value="UniProtKB-UniRule"/>
</dbReference>
<dbReference type="CDD" id="cd07304">
    <property type="entry name" value="Chorismate_synthase"/>
    <property type="match status" value="1"/>
</dbReference>
<dbReference type="FunFam" id="3.60.150.10:FF:000002">
    <property type="entry name" value="Chorismate synthase"/>
    <property type="match status" value="1"/>
</dbReference>
<dbReference type="Gene3D" id="3.60.150.10">
    <property type="entry name" value="Chorismate synthase AroC"/>
    <property type="match status" value="1"/>
</dbReference>
<dbReference type="HAMAP" id="MF_00300">
    <property type="entry name" value="Chorismate_synth"/>
    <property type="match status" value="1"/>
</dbReference>
<dbReference type="InterPro" id="IPR000453">
    <property type="entry name" value="Chorismate_synth"/>
</dbReference>
<dbReference type="InterPro" id="IPR035904">
    <property type="entry name" value="Chorismate_synth_AroC_sf"/>
</dbReference>
<dbReference type="InterPro" id="IPR020541">
    <property type="entry name" value="Chorismate_synthase_CS"/>
</dbReference>
<dbReference type="NCBIfam" id="TIGR00033">
    <property type="entry name" value="aroC"/>
    <property type="match status" value="1"/>
</dbReference>
<dbReference type="NCBIfam" id="NF003793">
    <property type="entry name" value="PRK05382.1"/>
    <property type="match status" value="1"/>
</dbReference>
<dbReference type="PANTHER" id="PTHR21085">
    <property type="entry name" value="CHORISMATE SYNTHASE"/>
    <property type="match status" value="1"/>
</dbReference>
<dbReference type="PANTHER" id="PTHR21085:SF0">
    <property type="entry name" value="CHORISMATE SYNTHASE"/>
    <property type="match status" value="1"/>
</dbReference>
<dbReference type="Pfam" id="PF01264">
    <property type="entry name" value="Chorismate_synt"/>
    <property type="match status" value="1"/>
</dbReference>
<dbReference type="PIRSF" id="PIRSF001456">
    <property type="entry name" value="Chorismate_synth"/>
    <property type="match status" value="1"/>
</dbReference>
<dbReference type="SUPFAM" id="SSF103263">
    <property type="entry name" value="Chorismate synthase, AroC"/>
    <property type="match status" value="1"/>
</dbReference>
<dbReference type="PROSITE" id="PS00787">
    <property type="entry name" value="CHORISMATE_SYNTHASE_1"/>
    <property type="match status" value="1"/>
</dbReference>
<dbReference type="PROSITE" id="PS00788">
    <property type="entry name" value="CHORISMATE_SYNTHASE_2"/>
    <property type="match status" value="1"/>
</dbReference>
<dbReference type="PROSITE" id="PS00789">
    <property type="entry name" value="CHORISMATE_SYNTHASE_3"/>
    <property type="match status" value="1"/>
</dbReference>
<gene>
    <name evidence="1" type="primary">aroC</name>
    <name type="ordered locus">SZO_10970</name>
</gene>
<name>AROC_STRS7</name>
<reference key="1">
    <citation type="journal article" date="2009" name="PLoS Pathog.">
        <title>Genomic evidence for the evolution of Streptococcus equi: host restriction, increased virulence, and genetic exchange with human pathogens.</title>
        <authorList>
            <person name="Holden M.T.G."/>
            <person name="Heather Z."/>
            <person name="Paillot R."/>
            <person name="Steward K.F."/>
            <person name="Webb K."/>
            <person name="Ainslie F."/>
            <person name="Jourdan T."/>
            <person name="Bason N.C."/>
            <person name="Holroyd N.E."/>
            <person name="Mungall K."/>
            <person name="Quail M.A."/>
            <person name="Sanders M."/>
            <person name="Simmonds M."/>
            <person name="Willey D."/>
            <person name="Brooks K."/>
            <person name="Aanensen D.M."/>
            <person name="Spratt B.G."/>
            <person name="Jolley K.A."/>
            <person name="Maiden M.C.J."/>
            <person name="Kehoe M."/>
            <person name="Chanter N."/>
            <person name="Bentley S.D."/>
            <person name="Robinson C."/>
            <person name="Maskell D.J."/>
            <person name="Parkhill J."/>
            <person name="Waller A.S."/>
        </authorList>
    </citation>
    <scope>NUCLEOTIDE SEQUENCE [LARGE SCALE GENOMIC DNA]</scope>
    <source>
        <strain>H70</strain>
    </source>
</reference>
<feature type="chain" id="PRO_1000204958" description="Chorismate synthase">
    <location>
        <begin position="1"/>
        <end position="388"/>
    </location>
</feature>
<feature type="binding site" evidence="1">
    <location>
        <position position="39"/>
    </location>
    <ligand>
        <name>NADP(+)</name>
        <dbReference type="ChEBI" id="CHEBI:58349"/>
    </ligand>
</feature>
<feature type="binding site" evidence="1">
    <location>
        <position position="45"/>
    </location>
    <ligand>
        <name>NADP(+)</name>
        <dbReference type="ChEBI" id="CHEBI:58349"/>
    </ligand>
</feature>
<feature type="binding site" evidence="1">
    <location>
        <begin position="130"/>
        <end position="132"/>
    </location>
    <ligand>
        <name>FMN</name>
        <dbReference type="ChEBI" id="CHEBI:58210"/>
    </ligand>
</feature>
<feature type="binding site" evidence="1">
    <location>
        <begin position="251"/>
        <end position="252"/>
    </location>
    <ligand>
        <name>FMN</name>
        <dbReference type="ChEBI" id="CHEBI:58210"/>
    </ligand>
</feature>
<feature type="binding site" evidence="1">
    <location>
        <position position="296"/>
    </location>
    <ligand>
        <name>FMN</name>
        <dbReference type="ChEBI" id="CHEBI:58210"/>
    </ligand>
</feature>
<feature type="binding site" evidence="1">
    <location>
        <begin position="311"/>
        <end position="315"/>
    </location>
    <ligand>
        <name>FMN</name>
        <dbReference type="ChEBI" id="CHEBI:58210"/>
    </ligand>
</feature>
<feature type="binding site" evidence="1">
    <location>
        <position position="337"/>
    </location>
    <ligand>
        <name>FMN</name>
        <dbReference type="ChEBI" id="CHEBI:58210"/>
    </ligand>
</feature>
<evidence type="ECO:0000255" key="1">
    <source>
        <dbReference type="HAMAP-Rule" id="MF_00300"/>
    </source>
</evidence>
<keyword id="KW-0028">Amino-acid biosynthesis</keyword>
<keyword id="KW-0057">Aromatic amino acid biosynthesis</keyword>
<keyword id="KW-0274">FAD</keyword>
<keyword id="KW-0285">Flavoprotein</keyword>
<keyword id="KW-0288">FMN</keyword>
<keyword id="KW-0456">Lyase</keyword>
<keyword id="KW-0521">NADP</keyword>